<name>SUCC_CUPPJ</name>
<dbReference type="EC" id="6.2.1.5" evidence="1"/>
<dbReference type="EMBL" id="CP000090">
    <property type="protein sequence ID" value="AAZ59912.1"/>
    <property type="molecule type" value="Genomic_DNA"/>
</dbReference>
<dbReference type="SMR" id="Q475M1"/>
<dbReference type="STRING" id="264198.Reut_A0530"/>
<dbReference type="KEGG" id="reu:Reut_A0530"/>
<dbReference type="eggNOG" id="COG0045">
    <property type="taxonomic scope" value="Bacteria"/>
</dbReference>
<dbReference type="HOGENOM" id="CLU_037430_0_2_4"/>
<dbReference type="OrthoDB" id="9802602at2"/>
<dbReference type="UniPathway" id="UPA00223">
    <property type="reaction ID" value="UER00999"/>
</dbReference>
<dbReference type="GO" id="GO:0005829">
    <property type="term" value="C:cytosol"/>
    <property type="evidence" value="ECO:0007669"/>
    <property type="project" value="TreeGrafter"/>
</dbReference>
<dbReference type="GO" id="GO:0042709">
    <property type="term" value="C:succinate-CoA ligase complex"/>
    <property type="evidence" value="ECO:0007669"/>
    <property type="project" value="TreeGrafter"/>
</dbReference>
<dbReference type="GO" id="GO:0005524">
    <property type="term" value="F:ATP binding"/>
    <property type="evidence" value="ECO:0007669"/>
    <property type="project" value="UniProtKB-UniRule"/>
</dbReference>
<dbReference type="GO" id="GO:0000287">
    <property type="term" value="F:magnesium ion binding"/>
    <property type="evidence" value="ECO:0007669"/>
    <property type="project" value="UniProtKB-UniRule"/>
</dbReference>
<dbReference type="GO" id="GO:0004775">
    <property type="term" value="F:succinate-CoA ligase (ADP-forming) activity"/>
    <property type="evidence" value="ECO:0007669"/>
    <property type="project" value="UniProtKB-UniRule"/>
</dbReference>
<dbReference type="GO" id="GO:0004776">
    <property type="term" value="F:succinate-CoA ligase (GDP-forming) activity"/>
    <property type="evidence" value="ECO:0007669"/>
    <property type="project" value="RHEA"/>
</dbReference>
<dbReference type="GO" id="GO:0006104">
    <property type="term" value="P:succinyl-CoA metabolic process"/>
    <property type="evidence" value="ECO:0007669"/>
    <property type="project" value="TreeGrafter"/>
</dbReference>
<dbReference type="GO" id="GO:0006099">
    <property type="term" value="P:tricarboxylic acid cycle"/>
    <property type="evidence" value="ECO:0007669"/>
    <property type="project" value="UniProtKB-UniRule"/>
</dbReference>
<dbReference type="FunFam" id="3.30.1490.20:FF:000002">
    <property type="entry name" value="Succinate--CoA ligase [ADP-forming] subunit beta"/>
    <property type="match status" value="1"/>
</dbReference>
<dbReference type="FunFam" id="3.30.470.20:FF:000002">
    <property type="entry name" value="Succinate--CoA ligase [ADP-forming] subunit beta"/>
    <property type="match status" value="1"/>
</dbReference>
<dbReference type="FunFam" id="3.40.50.261:FF:000001">
    <property type="entry name" value="Succinate--CoA ligase [ADP-forming] subunit beta"/>
    <property type="match status" value="1"/>
</dbReference>
<dbReference type="Gene3D" id="3.30.1490.20">
    <property type="entry name" value="ATP-grasp fold, A domain"/>
    <property type="match status" value="1"/>
</dbReference>
<dbReference type="Gene3D" id="3.30.470.20">
    <property type="entry name" value="ATP-grasp fold, B domain"/>
    <property type="match status" value="1"/>
</dbReference>
<dbReference type="Gene3D" id="3.40.50.261">
    <property type="entry name" value="Succinyl-CoA synthetase domains"/>
    <property type="match status" value="1"/>
</dbReference>
<dbReference type="HAMAP" id="MF_00558">
    <property type="entry name" value="Succ_CoA_beta"/>
    <property type="match status" value="1"/>
</dbReference>
<dbReference type="InterPro" id="IPR011761">
    <property type="entry name" value="ATP-grasp"/>
</dbReference>
<dbReference type="InterPro" id="IPR013650">
    <property type="entry name" value="ATP-grasp_succ-CoA_synth-type"/>
</dbReference>
<dbReference type="InterPro" id="IPR013815">
    <property type="entry name" value="ATP_grasp_subdomain_1"/>
</dbReference>
<dbReference type="InterPro" id="IPR017866">
    <property type="entry name" value="Succ-CoA_synthase_bsu_CS"/>
</dbReference>
<dbReference type="InterPro" id="IPR005811">
    <property type="entry name" value="SUCC_ACL_C"/>
</dbReference>
<dbReference type="InterPro" id="IPR005809">
    <property type="entry name" value="Succ_CoA_ligase-like_bsu"/>
</dbReference>
<dbReference type="InterPro" id="IPR016102">
    <property type="entry name" value="Succinyl-CoA_synth-like"/>
</dbReference>
<dbReference type="NCBIfam" id="NF001913">
    <property type="entry name" value="PRK00696.1"/>
    <property type="match status" value="1"/>
</dbReference>
<dbReference type="NCBIfam" id="TIGR01016">
    <property type="entry name" value="sucCoAbeta"/>
    <property type="match status" value="1"/>
</dbReference>
<dbReference type="PANTHER" id="PTHR11815:SF10">
    <property type="entry name" value="SUCCINATE--COA LIGASE [GDP-FORMING] SUBUNIT BETA, MITOCHONDRIAL"/>
    <property type="match status" value="1"/>
</dbReference>
<dbReference type="PANTHER" id="PTHR11815">
    <property type="entry name" value="SUCCINYL-COA SYNTHETASE BETA CHAIN"/>
    <property type="match status" value="1"/>
</dbReference>
<dbReference type="Pfam" id="PF08442">
    <property type="entry name" value="ATP-grasp_2"/>
    <property type="match status" value="1"/>
</dbReference>
<dbReference type="Pfam" id="PF00549">
    <property type="entry name" value="Ligase_CoA"/>
    <property type="match status" value="1"/>
</dbReference>
<dbReference type="PIRSF" id="PIRSF001554">
    <property type="entry name" value="SucCS_beta"/>
    <property type="match status" value="1"/>
</dbReference>
<dbReference type="SUPFAM" id="SSF56059">
    <property type="entry name" value="Glutathione synthetase ATP-binding domain-like"/>
    <property type="match status" value="1"/>
</dbReference>
<dbReference type="SUPFAM" id="SSF52210">
    <property type="entry name" value="Succinyl-CoA synthetase domains"/>
    <property type="match status" value="1"/>
</dbReference>
<dbReference type="PROSITE" id="PS50975">
    <property type="entry name" value="ATP_GRASP"/>
    <property type="match status" value="1"/>
</dbReference>
<dbReference type="PROSITE" id="PS01217">
    <property type="entry name" value="SUCCINYL_COA_LIG_3"/>
    <property type="match status" value="1"/>
</dbReference>
<gene>
    <name evidence="1" type="primary">sucC</name>
    <name type="ordered locus">Reut_A0530</name>
</gene>
<protein>
    <recommendedName>
        <fullName evidence="1">Succinate--CoA ligase [ADP-forming] subunit beta</fullName>
        <ecNumber evidence="1">6.2.1.5</ecNumber>
    </recommendedName>
    <alternativeName>
        <fullName evidence="1">Succinyl-CoA synthetase subunit beta</fullName>
        <shortName evidence="1">SCS-beta</shortName>
    </alternativeName>
</protein>
<keyword id="KW-0067">ATP-binding</keyword>
<keyword id="KW-0436">Ligase</keyword>
<keyword id="KW-0460">Magnesium</keyword>
<keyword id="KW-0479">Metal-binding</keyword>
<keyword id="KW-0547">Nucleotide-binding</keyword>
<keyword id="KW-0816">Tricarboxylic acid cycle</keyword>
<evidence type="ECO:0000255" key="1">
    <source>
        <dbReference type="HAMAP-Rule" id="MF_00558"/>
    </source>
</evidence>
<accession>Q475M1</accession>
<sequence length="389" mass="41281">MNIHEYQGKEILRKYNVPVPRGIPAFSVAEALKAAEELGGPVWVVKAQIHAGGRGKGGGVKVAKSIDDVKTYATNILGMQLVTHQTGPEGKKVNRLLIEEGADIKKELYVSLVVDRVSQKIALMASSEGGMDIEEVAAHTPEKIHTLIIEPSTGLTDADADDIARKIGVPDASVAQARQALQGLYKAFYDTDASLAEINPLILTGEGKVIALDAKFNFDSNALFRHPEIVAYRDLDEEDANEIEASKFDLAYISLDGNIGCLVNGAGLAMATMDTIKLFGGEPANFLDVGGGATTEKVTEAFKLMLKNPNVEAILVNIFGGIMRCDVIAEGVISASKAVNLTVPLVVRMKGTNEDLGKKMLADSGLPIIAADTMEEAAQKVVAAAAGKK</sequence>
<proteinExistence type="inferred from homology"/>
<reference key="1">
    <citation type="journal article" date="2010" name="PLoS ONE">
        <title>The complete multipartite genome sequence of Cupriavidus necator JMP134, a versatile pollutant degrader.</title>
        <authorList>
            <person name="Lykidis A."/>
            <person name="Perez-Pantoja D."/>
            <person name="Ledger T."/>
            <person name="Mavromatis K."/>
            <person name="Anderson I.J."/>
            <person name="Ivanova N.N."/>
            <person name="Hooper S.D."/>
            <person name="Lapidus A."/>
            <person name="Lucas S."/>
            <person name="Gonzalez B."/>
            <person name="Kyrpides N.C."/>
        </authorList>
    </citation>
    <scope>NUCLEOTIDE SEQUENCE [LARGE SCALE GENOMIC DNA]</scope>
    <source>
        <strain>JMP134 / LMG 1197</strain>
    </source>
</reference>
<comment type="function">
    <text evidence="1">Succinyl-CoA synthetase functions in the citric acid cycle (TCA), coupling the hydrolysis of succinyl-CoA to the synthesis of either ATP or GTP and thus represents the only step of substrate-level phosphorylation in the TCA. The beta subunit provides nucleotide specificity of the enzyme and binds the substrate succinate, while the binding sites for coenzyme A and phosphate are found in the alpha subunit.</text>
</comment>
<comment type="catalytic activity">
    <reaction evidence="1">
        <text>succinate + ATP + CoA = succinyl-CoA + ADP + phosphate</text>
        <dbReference type="Rhea" id="RHEA:17661"/>
        <dbReference type="ChEBI" id="CHEBI:30031"/>
        <dbReference type="ChEBI" id="CHEBI:30616"/>
        <dbReference type="ChEBI" id="CHEBI:43474"/>
        <dbReference type="ChEBI" id="CHEBI:57287"/>
        <dbReference type="ChEBI" id="CHEBI:57292"/>
        <dbReference type="ChEBI" id="CHEBI:456216"/>
        <dbReference type="EC" id="6.2.1.5"/>
    </reaction>
    <physiologicalReaction direction="right-to-left" evidence="1">
        <dbReference type="Rhea" id="RHEA:17663"/>
    </physiologicalReaction>
</comment>
<comment type="catalytic activity">
    <reaction evidence="1">
        <text>GTP + succinate + CoA = succinyl-CoA + GDP + phosphate</text>
        <dbReference type="Rhea" id="RHEA:22120"/>
        <dbReference type="ChEBI" id="CHEBI:30031"/>
        <dbReference type="ChEBI" id="CHEBI:37565"/>
        <dbReference type="ChEBI" id="CHEBI:43474"/>
        <dbReference type="ChEBI" id="CHEBI:57287"/>
        <dbReference type="ChEBI" id="CHEBI:57292"/>
        <dbReference type="ChEBI" id="CHEBI:58189"/>
    </reaction>
    <physiologicalReaction direction="right-to-left" evidence="1">
        <dbReference type="Rhea" id="RHEA:22122"/>
    </physiologicalReaction>
</comment>
<comment type="cofactor">
    <cofactor evidence="1">
        <name>Mg(2+)</name>
        <dbReference type="ChEBI" id="CHEBI:18420"/>
    </cofactor>
    <text evidence="1">Binds 1 Mg(2+) ion per subunit.</text>
</comment>
<comment type="pathway">
    <text evidence="1">Carbohydrate metabolism; tricarboxylic acid cycle; succinate from succinyl-CoA (ligase route): step 1/1.</text>
</comment>
<comment type="subunit">
    <text evidence="1">Heterotetramer of two alpha and two beta subunits.</text>
</comment>
<comment type="similarity">
    <text evidence="1">Belongs to the succinate/malate CoA ligase beta subunit family.</text>
</comment>
<organism>
    <name type="scientific">Cupriavidus pinatubonensis (strain JMP 134 / LMG 1197)</name>
    <name type="common">Cupriavidus necator (strain JMP 134)</name>
    <dbReference type="NCBI Taxonomy" id="264198"/>
    <lineage>
        <taxon>Bacteria</taxon>
        <taxon>Pseudomonadati</taxon>
        <taxon>Pseudomonadota</taxon>
        <taxon>Betaproteobacteria</taxon>
        <taxon>Burkholderiales</taxon>
        <taxon>Burkholderiaceae</taxon>
        <taxon>Cupriavidus</taxon>
    </lineage>
</organism>
<feature type="chain" id="PRO_1000082184" description="Succinate--CoA ligase [ADP-forming] subunit beta">
    <location>
        <begin position="1"/>
        <end position="389"/>
    </location>
</feature>
<feature type="domain" description="ATP-grasp" evidence="1">
    <location>
        <begin position="9"/>
        <end position="244"/>
    </location>
</feature>
<feature type="binding site" evidence="1">
    <location>
        <position position="46"/>
    </location>
    <ligand>
        <name>ATP</name>
        <dbReference type="ChEBI" id="CHEBI:30616"/>
    </ligand>
</feature>
<feature type="binding site" evidence="1">
    <location>
        <begin position="53"/>
        <end position="55"/>
    </location>
    <ligand>
        <name>ATP</name>
        <dbReference type="ChEBI" id="CHEBI:30616"/>
    </ligand>
</feature>
<feature type="binding site" evidence="1">
    <location>
        <position position="99"/>
    </location>
    <ligand>
        <name>ATP</name>
        <dbReference type="ChEBI" id="CHEBI:30616"/>
    </ligand>
</feature>
<feature type="binding site" evidence="1">
    <location>
        <position position="102"/>
    </location>
    <ligand>
        <name>ATP</name>
        <dbReference type="ChEBI" id="CHEBI:30616"/>
    </ligand>
</feature>
<feature type="binding site" evidence="1">
    <location>
        <position position="107"/>
    </location>
    <ligand>
        <name>ATP</name>
        <dbReference type="ChEBI" id="CHEBI:30616"/>
    </ligand>
</feature>
<feature type="binding site" evidence="1">
    <location>
        <position position="199"/>
    </location>
    <ligand>
        <name>Mg(2+)</name>
        <dbReference type="ChEBI" id="CHEBI:18420"/>
    </ligand>
</feature>
<feature type="binding site" evidence="1">
    <location>
        <position position="213"/>
    </location>
    <ligand>
        <name>Mg(2+)</name>
        <dbReference type="ChEBI" id="CHEBI:18420"/>
    </ligand>
</feature>
<feature type="binding site" evidence="1">
    <location>
        <position position="264"/>
    </location>
    <ligand>
        <name>substrate</name>
        <note>ligand shared with subunit alpha</note>
    </ligand>
</feature>
<feature type="binding site" evidence="1">
    <location>
        <begin position="321"/>
        <end position="323"/>
    </location>
    <ligand>
        <name>substrate</name>
        <note>ligand shared with subunit alpha</note>
    </ligand>
</feature>